<accession>P96314</accession>
<proteinExistence type="inferred from homology"/>
<reference key="1">
    <citation type="submission" date="1997-03" db="EMBL/GenBank/DDBJ databases">
        <authorList>
            <person name="Bauer M."/>
            <person name="Baeuerlein E."/>
        </authorList>
    </citation>
    <scope>NUCLEOTIDE SEQUENCE [GENOMIC DNA]</scope>
</reference>
<keyword id="KW-0963">Cytoplasm</keyword>
<keyword id="KW-0488">Methylation</keyword>
<keyword id="KW-0648">Protein biosynthesis</keyword>
<keyword id="KW-0688">Ribosomal frameshifting</keyword>
<protein>
    <recommendedName>
        <fullName>Peptide chain release factor 2</fullName>
        <shortName>RF-2</shortName>
    </recommendedName>
</protein>
<evidence type="ECO:0000250" key="1"/>
<evidence type="ECO:0000305" key="2"/>
<comment type="function">
    <text evidence="1">Peptide chain release factor 2 directs the termination of translation in response to the peptide chain termination codons UGA and UAA.</text>
</comment>
<comment type="subcellular location">
    <subcellularLocation>
        <location evidence="1">Cytoplasm</location>
    </subcellularLocation>
</comment>
<comment type="PTM">
    <text evidence="1">Methylated by PrmC. Methylation increases the termination efficiency of RF2 (By similarity).</text>
</comment>
<comment type="miscellaneous">
    <text>The gene for this protein contains a UGA in-frame termination codon after Leu-24; a naturally occurring frameshift enables complete translation of RF-2. This provides a mechanism for the protein to regulate its own production.</text>
</comment>
<comment type="similarity">
    <text evidence="2">Belongs to the prokaryotic/mitochondrial release factor family.</text>
</comment>
<comment type="sequence caution" evidence="2">
    <conflict type="erroneous initiation">
        <sequence resource="EMBL-CDS" id="CAA67778"/>
    </conflict>
</comment>
<organism>
    <name type="scientific">Cytobacillus firmus</name>
    <name type="common">Bacillus firmus</name>
    <dbReference type="NCBI Taxonomy" id="1399"/>
    <lineage>
        <taxon>Bacteria</taxon>
        <taxon>Bacillati</taxon>
        <taxon>Bacillota</taxon>
        <taxon>Bacilli</taxon>
        <taxon>Bacillales</taxon>
        <taxon>Bacillaceae</taxon>
        <taxon>Cytobacillus</taxon>
    </lineage>
</organism>
<dbReference type="EMBL" id="X99401">
    <property type="protein sequence ID" value="CAA67778.1"/>
    <property type="status" value="ALT_INIT"/>
    <property type="molecule type" value="Genomic_DNA"/>
</dbReference>
<dbReference type="SMR" id="P96314"/>
<dbReference type="STRING" id="1399.VL14_11155"/>
<dbReference type="GO" id="GO:0005737">
    <property type="term" value="C:cytoplasm"/>
    <property type="evidence" value="ECO:0007669"/>
    <property type="project" value="UniProtKB-SubCell"/>
</dbReference>
<dbReference type="GO" id="GO:0016149">
    <property type="term" value="F:translation release factor activity, codon specific"/>
    <property type="evidence" value="ECO:0007669"/>
    <property type="project" value="InterPro"/>
</dbReference>
<dbReference type="GO" id="GO:0075523">
    <property type="term" value="P:viral translational frameshifting"/>
    <property type="evidence" value="ECO:0007669"/>
    <property type="project" value="UniProtKB-KW"/>
</dbReference>
<dbReference type="FunFam" id="3.30.160.20:FF:000020">
    <property type="entry name" value="Peptide chain release factor 1"/>
    <property type="match status" value="1"/>
</dbReference>
<dbReference type="Gene3D" id="3.30.160.20">
    <property type="match status" value="1"/>
</dbReference>
<dbReference type="Gene3D" id="3.30.70.1660">
    <property type="match status" value="1"/>
</dbReference>
<dbReference type="Gene3D" id="1.20.58.410">
    <property type="entry name" value="Release factor"/>
    <property type="match status" value="1"/>
</dbReference>
<dbReference type="InterPro" id="IPR005139">
    <property type="entry name" value="PCRF"/>
</dbReference>
<dbReference type="InterPro" id="IPR000352">
    <property type="entry name" value="Pep_chain_release_fac_I"/>
</dbReference>
<dbReference type="InterPro" id="IPR045853">
    <property type="entry name" value="Pep_chain_release_fac_I_sf"/>
</dbReference>
<dbReference type="InterPro" id="IPR004374">
    <property type="entry name" value="PrfB"/>
</dbReference>
<dbReference type="NCBIfam" id="TIGR00020">
    <property type="entry name" value="prfB"/>
    <property type="match status" value="1"/>
</dbReference>
<dbReference type="PANTHER" id="PTHR43116:SF3">
    <property type="entry name" value="CLASS I PEPTIDE CHAIN RELEASE FACTOR"/>
    <property type="match status" value="1"/>
</dbReference>
<dbReference type="PANTHER" id="PTHR43116">
    <property type="entry name" value="PEPTIDE CHAIN RELEASE FACTOR 2"/>
    <property type="match status" value="1"/>
</dbReference>
<dbReference type="Pfam" id="PF03462">
    <property type="entry name" value="PCRF"/>
    <property type="match status" value="1"/>
</dbReference>
<dbReference type="Pfam" id="PF00472">
    <property type="entry name" value="RF-1"/>
    <property type="match status" value="1"/>
</dbReference>
<dbReference type="SMART" id="SM00937">
    <property type="entry name" value="PCRF"/>
    <property type="match status" value="1"/>
</dbReference>
<dbReference type="SUPFAM" id="SSF75620">
    <property type="entry name" value="Release factor"/>
    <property type="match status" value="1"/>
</dbReference>
<dbReference type="PROSITE" id="PS00745">
    <property type="entry name" value="RF_PROK_I"/>
    <property type="match status" value="1"/>
</dbReference>
<sequence length="294" mass="33454">MELVEVKQELAAMAKRLTDFRGSLDLEAKQERMAELDEFMTAPDFWDDQEAAQTVINESNGLKEQVNVFLELEEKYENLEVSYELVKEEADEELEKELEAGVKELISRLNDFELQLLLSEPYDKNNAILELHPGAGGTESQDWASMLLRMYTRWSEQRGFKVETMDYLPGDEAGVKSVTLLIKGHNAYGYLKAEKGVHRLVRISPFDSSGRRHTSFVSCEVMPELDDNVEIDIRTEDLKVDTYRASGAGGQHINTTDSAIRITHLPTNTVVTCQSERSQIKNRDQAMKMLKAKL</sequence>
<gene>
    <name type="primary">prfB</name>
</gene>
<feature type="chain" id="PRO_0000166802" description="Peptide chain release factor 2">
    <location>
        <begin position="1"/>
        <end position="294" status="greater than"/>
    </location>
</feature>
<feature type="modified residue" description="N5-methylglutamine" evidence="1">
    <location>
        <position position="251"/>
    </location>
</feature>
<feature type="non-terminal residue">
    <location>
        <position position="294"/>
    </location>
</feature>
<name>RF2_CYTFI</name>